<keyword id="KW-0002">3D-structure</keyword>
<keyword id="KW-0963">Cytoplasm</keyword>
<keyword id="KW-0903">Direct protein sequencing</keyword>
<keyword id="KW-0328">Glycosyltransferase</keyword>
<keyword id="KW-1185">Reference proteome</keyword>
<keyword id="KW-0808">Transferase</keyword>
<feature type="initiator methionine" description="Removed" evidence="4 5 7">
    <location>
        <position position="1"/>
    </location>
</feature>
<feature type="chain" id="PRO_0000063183" description="Uridine phosphorylase">
    <location>
        <begin position="2"/>
        <end position="253"/>
    </location>
</feature>
<feature type="mutagenesis site" description="No change in activity." evidence="6">
    <original>D</original>
    <variation>A</variation>
    <variation>E</variation>
    <variation>N</variation>
    <location>
        <position position="5"/>
    </location>
</feature>
<feature type="sequence conflict" description="In Ref. 7; AA sequence." evidence="9" ref="7">
    <original>L</original>
    <variation>Y</variation>
    <location>
        <position position="11"/>
    </location>
</feature>
<feature type="sequence conflict" description="In Ref. 7; AA sequence." evidence="9" ref="7">
    <original>D</original>
    <variation>Y</variation>
    <location>
        <position position="15"/>
    </location>
</feature>
<feature type="strand" evidence="12">
    <location>
        <begin position="6"/>
        <end position="9"/>
    </location>
</feature>
<feature type="helix" evidence="12">
    <location>
        <begin position="13"/>
        <end position="16"/>
    </location>
</feature>
<feature type="strand" evidence="12">
    <location>
        <begin position="21"/>
        <end position="23"/>
    </location>
</feature>
<feature type="helix" evidence="12">
    <location>
        <begin position="28"/>
        <end position="30"/>
    </location>
</feature>
<feature type="helix" evidence="12">
    <location>
        <begin position="31"/>
        <end position="35"/>
    </location>
</feature>
<feature type="strand" evidence="12">
    <location>
        <begin position="38"/>
        <end position="47"/>
    </location>
</feature>
<feature type="strand" evidence="12">
    <location>
        <begin position="50"/>
        <end position="57"/>
    </location>
</feature>
<feature type="strand" evidence="12">
    <location>
        <begin position="60"/>
        <end position="65"/>
    </location>
</feature>
<feature type="helix" evidence="12">
    <location>
        <begin position="71"/>
        <end position="83"/>
    </location>
</feature>
<feature type="strand" evidence="12">
    <location>
        <begin position="88"/>
        <end position="97"/>
    </location>
</feature>
<feature type="strand" evidence="12">
    <location>
        <begin position="107"/>
        <end position="116"/>
    </location>
</feature>
<feature type="helix" evidence="12">
    <location>
        <begin position="119"/>
        <end position="122"/>
    </location>
</feature>
<feature type="helix" evidence="12">
    <location>
        <begin position="134"/>
        <end position="146"/>
    </location>
</feature>
<feature type="strand" evidence="12">
    <location>
        <begin position="151"/>
        <end position="160"/>
    </location>
</feature>
<feature type="helix" evidence="12">
    <location>
        <begin position="164"/>
        <end position="166"/>
    </location>
</feature>
<feature type="strand" evidence="12">
    <location>
        <begin position="171"/>
        <end position="173"/>
    </location>
</feature>
<feature type="helix" evidence="12">
    <location>
        <begin position="178"/>
        <end position="180"/>
    </location>
</feature>
<feature type="helix" evidence="12">
    <location>
        <begin position="183"/>
        <end position="189"/>
    </location>
</feature>
<feature type="strand" evidence="12">
    <location>
        <begin position="194"/>
        <end position="198"/>
    </location>
</feature>
<feature type="helix" evidence="12">
    <location>
        <begin position="199"/>
        <end position="207"/>
    </location>
</feature>
<feature type="turn" evidence="12">
    <location>
        <begin position="208"/>
        <end position="210"/>
    </location>
</feature>
<feature type="strand" evidence="12">
    <location>
        <begin position="212"/>
        <end position="222"/>
    </location>
</feature>
<feature type="turn" evidence="13">
    <location>
        <begin position="223"/>
        <end position="225"/>
    </location>
</feature>
<feature type="helix" evidence="12">
    <location>
        <begin position="231"/>
        <end position="251"/>
    </location>
</feature>
<gene>
    <name evidence="8" type="primary">udp</name>
    <name type="ordered locus">b3831</name>
    <name type="ordered locus">JW3808</name>
</gene>
<evidence type="ECO:0000269" key="1">
    <source>
    </source>
</evidence>
<evidence type="ECO:0000269" key="2">
    <source>
    </source>
</evidence>
<evidence type="ECO:0000269" key="3">
    <source>
    </source>
</evidence>
<evidence type="ECO:0000269" key="4">
    <source>
    </source>
</evidence>
<evidence type="ECO:0000269" key="5">
    <source>
    </source>
</evidence>
<evidence type="ECO:0000269" key="6">
    <source>
    </source>
</evidence>
<evidence type="ECO:0000269" key="7">
    <source ref="6"/>
</evidence>
<evidence type="ECO:0000303" key="8">
    <source>
    </source>
</evidence>
<evidence type="ECO:0000305" key="9"/>
<evidence type="ECO:0007744" key="10">
    <source>
        <dbReference type="PDB" id="1K3F"/>
    </source>
</evidence>
<evidence type="ECO:0007744" key="11">
    <source>
        <dbReference type="PDB" id="1LX7"/>
    </source>
</evidence>
<evidence type="ECO:0007829" key="12">
    <source>
        <dbReference type="PDB" id="1RXY"/>
    </source>
</evidence>
<evidence type="ECO:0007829" key="13">
    <source>
        <dbReference type="PDB" id="1U1D"/>
    </source>
</evidence>
<protein>
    <recommendedName>
        <fullName evidence="8">Uridine phosphorylase</fullName>
        <shortName evidence="9">UPase</shortName>
        <shortName evidence="9">UrdPase</shortName>
        <ecNumber evidence="2">2.4.2.3</ecNumber>
    </recommendedName>
</protein>
<name>UDP_ECOLI</name>
<organism>
    <name type="scientific">Escherichia coli (strain K12)</name>
    <dbReference type="NCBI Taxonomy" id="83333"/>
    <lineage>
        <taxon>Bacteria</taxon>
        <taxon>Pseudomonadati</taxon>
        <taxon>Pseudomonadota</taxon>
        <taxon>Gammaproteobacteria</taxon>
        <taxon>Enterobacterales</taxon>
        <taxon>Enterobacteriaceae</taxon>
        <taxon>Escherichia</taxon>
    </lineage>
</organism>
<dbReference type="EC" id="2.4.2.3" evidence="2"/>
<dbReference type="EMBL" id="X15689">
    <property type="protein sequence ID" value="CAA33724.1"/>
    <property type="molecule type" value="Genomic_DNA"/>
</dbReference>
<dbReference type="EMBL" id="M87049">
    <property type="protein sequence ID" value="AAA67626.1"/>
    <property type="molecule type" value="Genomic_DNA"/>
</dbReference>
<dbReference type="EMBL" id="U00096">
    <property type="protein sequence ID" value="AAC76834.1"/>
    <property type="molecule type" value="Genomic_DNA"/>
</dbReference>
<dbReference type="EMBL" id="AP009048">
    <property type="protein sequence ID" value="BAE77470.1"/>
    <property type="molecule type" value="Genomic_DNA"/>
</dbReference>
<dbReference type="PIR" id="S05491">
    <property type="entry name" value="S05491"/>
</dbReference>
<dbReference type="RefSeq" id="NP_418275.1">
    <property type="nucleotide sequence ID" value="NC_000913.3"/>
</dbReference>
<dbReference type="RefSeq" id="WP_000045177.1">
    <property type="nucleotide sequence ID" value="NZ_LN832404.1"/>
</dbReference>
<dbReference type="PDB" id="1K3F">
    <property type="method" value="X-ray"/>
    <property type="resolution" value="2.50 A"/>
    <property type="chains" value="A/B/C/D/E/F=1-253"/>
</dbReference>
<dbReference type="PDB" id="1LX7">
    <property type="method" value="X-ray"/>
    <property type="resolution" value="2.00 A"/>
    <property type="chains" value="A/B=1-253"/>
</dbReference>
<dbReference type="PDB" id="1RXC">
    <property type="method" value="X-ray"/>
    <property type="resolution" value="2.35 A"/>
    <property type="chains" value="A/B/C/D/E/F/G/H/I/J/K/L=1-253"/>
</dbReference>
<dbReference type="PDB" id="1RXS">
    <property type="method" value="X-ray"/>
    <property type="resolution" value="2.80 A"/>
    <property type="chains" value="A/B/C/D/E/F/G/H/I/J/K/L/M/N/O/P/Q/R/a/b/c/d/e/h/i/j/k/l/m/o=1-253"/>
</dbReference>
<dbReference type="PDB" id="1RXU">
    <property type="method" value="X-ray"/>
    <property type="resolution" value="3.10 A"/>
    <property type="chains" value="A/B/C/D/E/F/G/H/I/J/K/L/M/N/O/P/Q/R=1-253"/>
</dbReference>
<dbReference type="PDB" id="1RXY">
    <property type="method" value="X-ray"/>
    <property type="resolution" value="1.70 A"/>
    <property type="chains" value="A/B=1-253"/>
</dbReference>
<dbReference type="PDB" id="1T0U">
    <property type="method" value="X-ray"/>
    <property type="resolution" value="2.20 A"/>
    <property type="chains" value="A/B=1-253"/>
</dbReference>
<dbReference type="PDB" id="1TGV">
    <property type="method" value="X-ray"/>
    <property type="resolution" value="2.20 A"/>
    <property type="chains" value="A/B=1-253"/>
</dbReference>
<dbReference type="PDB" id="1TGY">
    <property type="method" value="X-ray"/>
    <property type="resolution" value="2.20 A"/>
    <property type="chains" value="A/B=1-253"/>
</dbReference>
<dbReference type="PDB" id="1U1C">
    <property type="method" value="X-ray"/>
    <property type="resolution" value="2.20 A"/>
    <property type="chains" value="A/B/C/D/E/F=2-253"/>
</dbReference>
<dbReference type="PDB" id="1U1D">
    <property type="method" value="X-ray"/>
    <property type="resolution" value="2.00 A"/>
    <property type="chains" value="A/B/C/D/E/F=2-253"/>
</dbReference>
<dbReference type="PDB" id="1U1E">
    <property type="method" value="X-ray"/>
    <property type="resolution" value="2.00 A"/>
    <property type="chains" value="A/B/C/D/E/F=2-253"/>
</dbReference>
<dbReference type="PDB" id="1U1F">
    <property type="method" value="X-ray"/>
    <property type="resolution" value="2.30 A"/>
    <property type="chains" value="A/B/C/D/E/F=2-253"/>
</dbReference>
<dbReference type="PDB" id="1U1G">
    <property type="method" value="X-ray"/>
    <property type="resolution" value="1.95 A"/>
    <property type="chains" value="A/B/C/D/E/F=2-253"/>
</dbReference>
<dbReference type="PDB" id="3KVV">
    <property type="method" value="X-ray"/>
    <property type="resolution" value="1.80 A"/>
    <property type="chains" value="A/B/C/D/E/F=1-253"/>
</dbReference>
<dbReference type="PDB" id="7Q31">
    <property type="method" value="X-ray"/>
    <property type="resolution" value="1.75 A"/>
    <property type="chains" value="AAA/BBB=4-253"/>
</dbReference>
<dbReference type="PDB" id="7Q32">
    <property type="method" value="X-ray"/>
    <property type="resolution" value="1.70 A"/>
    <property type="chains" value="AAA/BBB=4-253"/>
</dbReference>
<dbReference type="PDBsum" id="1K3F"/>
<dbReference type="PDBsum" id="1LX7"/>
<dbReference type="PDBsum" id="1RXC"/>
<dbReference type="PDBsum" id="1RXS"/>
<dbReference type="PDBsum" id="1RXU"/>
<dbReference type="PDBsum" id="1RXY"/>
<dbReference type="PDBsum" id="1T0U"/>
<dbReference type="PDBsum" id="1TGV"/>
<dbReference type="PDBsum" id="1TGY"/>
<dbReference type="PDBsum" id="1U1C"/>
<dbReference type="PDBsum" id="1U1D"/>
<dbReference type="PDBsum" id="1U1E"/>
<dbReference type="PDBsum" id="1U1F"/>
<dbReference type="PDBsum" id="1U1G"/>
<dbReference type="PDBsum" id="3KVV"/>
<dbReference type="PDBsum" id="7Q31"/>
<dbReference type="PDBsum" id="7Q32"/>
<dbReference type="SMR" id="P12758"/>
<dbReference type="BioGRID" id="4263299">
    <property type="interactions" value="13"/>
</dbReference>
<dbReference type="DIP" id="DIP-11075N"/>
<dbReference type="FunCoup" id="P12758">
    <property type="interactions" value="375"/>
</dbReference>
<dbReference type="IntAct" id="P12758">
    <property type="interactions" value="4"/>
</dbReference>
<dbReference type="MINT" id="P12758"/>
<dbReference type="STRING" id="511145.b3831"/>
<dbReference type="DrugBank" id="DB07439">
    <property type="generic name" value="1-((2-HYDROXYETHOXY)METHYL)-5-(3-(BENZYLOXY)BENZYL)-6-HYDROXYPYRIMIDINE-2,4(1H,3H)-DIONE"/>
</dbReference>
<dbReference type="DrugBank" id="DB06873">
    <property type="generic name" value="1-((2-HYDROXYETHOXY)METHYL)-5-(3-(BENZYLOXY)BENZYL)PYRIMIDINE-2,4(1H,3H)-DIONE"/>
</dbReference>
<dbReference type="DrugBank" id="DB06872">
    <property type="generic name" value="1-((2-HYDROXYETHOXY)METHYL)-5-(PHENYLTHIO)PYRIMIDINE-2,4(1H,3H)-DIONE"/>
</dbReference>
<dbReference type="DrugBank" id="DB02256">
    <property type="generic name" value="2'-Deoxyuridine"/>
</dbReference>
<dbReference type="DrugBank" id="DB02681">
    <property type="generic name" value="2,8-bis[oxido(oxo)vanadio]-1,1,1,3,5,5,7,7,9,9,9-undecaoxopentavanadoxane-2,8-diium"/>
</dbReference>
<dbReference type="DrugBank" id="DB07437">
    <property type="generic name" value="5-Benzylacyclouridine"/>
</dbReference>
<dbReference type="DrugBank" id="DB01629">
    <property type="generic name" value="5-fluorouridine"/>
</dbReference>
<dbReference type="DrugBank" id="DB03101">
    <property type="generic name" value="Ribose-1-Phosphate"/>
</dbReference>
<dbReference type="DrugBank" id="DB04485">
    <property type="generic name" value="Thymidine"/>
</dbReference>
<dbReference type="jPOST" id="P12758"/>
<dbReference type="PaxDb" id="511145-b3831"/>
<dbReference type="EnsemblBacteria" id="AAC76834">
    <property type="protein sequence ID" value="AAC76834"/>
    <property type="gene ID" value="b3831"/>
</dbReference>
<dbReference type="GeneID" id="86948517"/>
<dbReference type="GeneID" id="948987"/>
<dbReference type="KEGG" id="ecj:JW3808"/>
<dbReference type="KEGG" id="eco:b3831"/>
<dbReference type="KEGG" id="ecoc:C3026_20730"/>
<dbReference type="PATRIC" id="fig|511145.12.peg.3947"/>
<dbReference type="EchoBASE" id="EB1038"/>
<dbReference type="eggNOG" id="COG2820">
    <property type="taxonomic scope" value="Bacteria"/>
</dbReference>
<dbReference type="HOGENOM" id="CLU_068457_0_0_6"/>
<dbReference type="InParanoid" id="P12758"/>
<dbReference type="OMA" id="MSDVFHL"/>
<dbReference type="OrthoDB" id="5296640at2"/>
<dbReference type="PhylomeDB" id="P12758"/>
<dbReference type="BioCyc" id="EcoCyc:URPHOS-MONOMER"/>
<dbReference type="BioCyc" id="MetaCyc:URPHOS-MONOMER"/>
<dbReference type="BRENDA" id="2.4.2.3">
    <property type="organism ID" value="2026"/>
</dbReference>
<dbReference type="UniPathway" id="UPA00574">
    <property type="reaction ID" value="UER00633"/>
</dbReference>
<dbReference type="EvolutionaryTrace" id="P12758"/>
<dbReference type="PRO" id="PR:P12758"/>
<dbReference type="Proteomes" id="UP000000625">
    <property type="component" value="Chromosome"/>
</dbReference>
<dbReference type="GO" id="GO:0005829">
    <property type="term" value="C:cytosol"/>
    <property type="evidence" value="ECO:0000314"/>
    <property type="project" value="EcoCyc"/>
</dbReference>
<dbReference type="GO" id="GO:0032991">
    <property type="term" value="C:protein-containing complex"/>
    <property type="evidence" value="ECO:0000314"/>
    <property type="project" value="EcoCyc"/>
</dbReference>
<dbReference type="GO" id="GO:0005524">
    <property type="term" value="F:ATP binding"/>
    <property type="evidence" value="ECO:0000314"/>
    <property type="project" value="EcoCyc"/>
</dbReference>
<dbReference type="GO" id="GO:0042802">
    <property type="term" value="F:identical protein binding"/>
    <property type="evidence" value="ECO:0000314"/>
    <property type="project" value="EcoCyc"/>
</dbReference>
<dbReference type="GO" id="GO:0030955">
    <property type="term" value="F:potassium ion binding"/>
    <property type="evidence" value="ECO:0000314"/>
    <property type="project" value="EcoCyc"/>
</dbReference>
<dbReference type="GO" id="GO:0004850">
    <property type="term" value="F:uridine phosphorylase activity"/>
    <property type="evidence" value="ECO:0000314"/>
    <property type="project" value="EcoCyc"/>
</dbReference>
<dbReference type="GO" id="GO:0006974">
    <property type="term" value="P:DNA damage response"/>
    <property type="evidence" value="ECO:0000270"/>
    <property type="project" value="EcoliWiki"/>
</dbReference>
<dbReference type="GO" id="GO:0046050">
    <property type="term" value="P:UMP catabolic process"/>
    <property type="evidence" value="ECO:0000269"/>
    <property type="project" value="EcoCyc"/>
</dbReference>
<dbReference type="GO" id="GO:0044206">
    <property type="term" value="P:UMP salvage"/>
    <property type="evidence" value="ECO:0007669"/>
    <property type="project" value="UniProtKB-UniPathway"/>
</dbReference>
<dbReference type="GO" id="GO:0006218">
    <property type="term" value="P:uridine catabolic process"/>
    <property type="evidence" value="ECO:0000315"/>
    <property type="project" value="EcoCyc"/>
</dbReference>
<dbReference type="CDD" id="cd17767">
    <property type="entry name" value="UP_EcUdp-like"/>
    <property type="match status" value="1"/>
</dbReference>
<dbReference type="FunFam" id="3.40.50.1580:FF:000003">
    <property type="entry name" value="Uridine phosphorylase"/>
    <property type="match status" value="1"/>
</dbReference>
<dbReference type="Gene3D" id="3.40.50.1580">
    <property type="entry name" value="Nucleoside phosphorylase domain"/>
    <property type="match status" value="1"/>
</dbReference>
<dbReference type="InterPro" id="IPR018016">
    <property type="entry name" value="Nucleoside_phosphorylase_CS"/>
</dbReference>
<dbReference type="InterPro" id="IPR000845">
    <property type="entry name" value="Nucleoside_phosphorylase_d"/>
</dbReference>
<dbReference type="InterPro" id="IPR035994">
    <property type="entry name" value="Nucleoside_phosphorylase_sf"/>
</dbReference>
<dbReference type="InterPro" id="IPR010058">
    <property type="entry name" value="Uridine_phosphorylase"/>
</dbReference>
<dbReference type="NCBIfam" id="NF008383">
    <property type="entry name" value="PRK11178.1"/>
    <property type="match status" value="1"/>
</dbReference>
<dbReference type="NCBIfam" id="TIGR01718">
    <property type="entry name" value="Uridine-psphlse"/>
    <property type="match status" value="1"/>
</dbReference>
<dbReference type="PANTHER" id="PTHR43691:SF11">
    <property type="entry name" value="FI09636P-RELATED"/>
    <property type="match status" value="1"/>
</dbReference>
<dbReference type="PANTHER" id="PTHR43691">
    <property type="entry name" value="URIDINE PHOSPHORYLASE"/>
    <property type="match status" value="1"/>
</dbReference>
<dbReference type="Pfam" id="PF01048">
    <property type="entry name" value="PNP_UDP_1"/>
    <property type="match status" value="1"/>
</dbReference>
<dbReference type="SUPFAM" id="SSF53167">
    <property type="entry name" value="Purine and uridine phosphorylases"/>
    <property type="match status" value="1"/>
</dbReference>
<dbReference type="PROSITE" id="PS01232">
    <property type="entry name" value="PNP_UDP_1"/>
    <property type="match status" value="1"/>
</dbReference>
<sequence>MSKSDVFHLGLTKNDLQGATLAIVPGDPDRVEKIAALMDKPVKLASHREFTTWRAELDGKPVIVCSTGIGGPSTSIAVEELAQLGIRTFLRIGTTGAIQPHINVGDVLVTTASVRLDGASLHFAPLEFPAVADFECTTALVEAAKSIGATTHVGVTASSDTFYPGQERYDTYSGRVVRHFKGSMEEWQAMGVMNYEMESATLLTMCASQGLRAGMVAGVIVNRTQQEIPNAETMKQTESHAVKIVVEAARRLL</sequence>
<accession>P12758</accession>
<accession>Q2M8D6</accession>
<reference key="1">
    <citation type="journal article" date="1989" name="Nucleic Acids Res.">
        <title>Nucleotide sequence of the Escherichia coli uridine phosphorylase (udp) gene.</title>
        <authorList>
            <person name="Walton L."/>
            <person name="Richards C.A."/>
            <person name="Elwell L.P."/>
        </authorList>
    </citation>
    <scope>NUCLEOTIDE SEQUENCE [GENOMIC DNA]</scope>
    <source>
        <strain>K12</strain>
    </source>
</reference>
<reference key="2">
    <citation type="journal article" date="1992" name="Science">
        <title>Analysis of the Escherichia coli genome: DNA sequence of the region from 84.5 to 86.5 minutes.</title>
        <authorList>
            <person name="Daniels D.L."/>
            <person name="Plunkett G. III"/>
            <person name="Burland V.D."/>
            <person name="Blattner F.R."/>
        </authorList>
    </citation>
    <scope>NUCLEOTIDE SEQUENCE [LARGE SCALE GENOMIC DNA]</scope>
    <source>
        <strain>K12 / MG1655 / ATCC 47076</strain>
    </source>
</reference>
<reference key="3">
    <citation type="journal article" date="1997" name="Science">
        <title>The complete genome sequence of Escherichia coli K-12.</title>
        <authorList>
            <person name="Blattner F.R."/>
            <person name="Plunkett G. III"/>
            <person name="Bloch C.A."/>
            <person name="Perna N.T."/>
            <person name="Burland V."/>
            <person name="Riley M."/>
            <person name="Collado-Vides J."/>
            <person name="Glasner J.D."/>
            <person name="Rode C.K."/>
            <person name="Mayhew G.F."/>
            <person name="Gregor J."/>
            <person name="Davis N.W."/>
            <person name="Kirkpatrick H.A."/>
            <person name="Goeden M.A."/>
            <person name="Rose D.J."/>
            <person name="Mau B."/>
            <person name="Shao Y."/>
        </authorList>
    </citation>
    <scope>NUCLEOTIDE SEQUENCE [LARGE SCALE GENOMIC DNA]</scope>
    <source>
        <strain>K12 / MG1655 / ATCC 47076</strain>
    </source>
</reference>
<reference key="4">
    <citation type="journal article" date="2006" name="Mol. Syst. Biol.">
        <title>Highly accurate genome sequences of Escherichia coli K-12 strains MG1655 and W3110.</title>
        <authorList>
            <person name="Hayashi K."/>
            <person name="Morooka N."/>
            <person name="Yamamoto Y."/>
            <person name="Fujita K."/>
            <person name="Isono K."/>
            <person name="Choi S."/>
            <person name="Ohtsubo E."/>
            <person name="Baba T."/>
            <person name="Wanner B.L."/>
            <person name="Mori H."/>
            <person name="Horiuchi T."/>
        </authorList>
    </citation>
    <scope>NUCLEOTIDE SEQUENCE [LARGE SCALE GENOMIC DNA]</scope>
    <source>
        <strain>K12 / W3110 / ATCC 27325 / DSM 5911</strain>
    </source>
</reference>
<reference key="5">
    <citation type="journal article" date="1993" name="Proc. Natl. Acad. Sci. U.S.A.">
        <title>Identifying proteins from two-dimensional gels by molecular mass searching of peptide fragments in protein sequence databases.</title>
        <authorList>
            <person name="Henzel W.J."/>
            <person name="Billeci T.M."/>
            <person name="Stults J.T."/>
            <person name="Wong S.C."/>
            <person name="Grimley C."/>
            <person name="Watanabe C."/>
        </authorList>
    </citation>
    <scope>PROTEIN SEQUENCE OF 2-18</scope>
</reference>
<reference key="6">
    <citation type="submission" date="1996-02" db="UniProtKB">
        <authorList>
            <person name="Frutiger S."/>
            <person name="Hughes G.J."/>
            <person name="Pasquali C."/>
            <person name="Hochstrasser D.F."/>
        </authorList>
    </citation>
    <scope>PROTEIN SEQUENCE OF 2-12</scope>
    <source>
        <strain>K12 / W3110 / ATCC 27325 / DSM 5911</strain>
    </source>
</reference>
<reference key="7">
    <citation type="journal article" date="1996" name="Mol. Microbiol.">
        <title>FIS is a regulator of metabolism in Escherichia coli.</title>
        <authorList>
            <person name="Gonzalez-Gil G."/>
            <person name="Bringmann P."/>
            <person name="Kahmann R."/>
        </authorList>
    </citation>
    <scope>PROTEIN SEQUENCE OF 2-16</scope>
    <source>
        <strain>K12</strain>
    </source>
</reference>
<reference key="8">
    <citation type="journal article" date="1977" name="Eur. J. Biochem.">
        <title>Uridine phosphorylase from Escherichia coli. Physical and chemical characterization.</title>
        <authorList>
            <person name="Leer J.C."/>
            <person name="Hammer-Jespersen K."/>
            <person name="Schwartz M."/>
        </authorList>
    </citation>
    <scope>FUNCTION</scope>
    <scope>CATALYTIC ACTIVITY</scope>
    <scope>BIOPHYSICOCHEMICAL PROPERTIES</scope>
</reference>
<reference key="9">
    <citation type="journal article" date="1998" name="Bioorg. Khim.">
        <title>Protein engineering of uridine phosphorylase from Escherichia coli K-12. I. Cloning and expression of uridine phosphorylase genes from Klebsiella aerogenes and Salmonella typhimurium in E. coli.</title>
        <authorList>
            <person name="Veiko V.P."/>
            <person name="Chebotaev D.V."/>
            <person name="Ovcharova I.V."/>
            <person name="Gul'Ko L.B."/>
        </authorList>
    </citation>
    <scope>MUTAGENESIS OF ASP-5</scope>
</reference>
<reference evidence="10" key="10">
    <citation type="journal article" date="1995" name="FEBS Lett.">
        <title>Atomic structure at 2.5-A resolution of uridine phosphorylase from E. coli as refined in the monoclinic crystal lattice.</title>
        <authorList>
            <person name="Morgunova E.Y."/>
            <person name="Mikhailov A.M."/>
            <person name="Popov A.N."/>
            <person name="Blagova E.V."/>
            <person name="Smirnova E.A."/>
            <person name="Vainshtein B.K."/>
            <person name="Mao C."/>
            <person name="Armstrong S.H.R."/>
            <person name="Ealick S.E."/>
            <person name="Komissarov A.A."/>
            <person name="Linkova E.V."/>
            <person name="Burlakova A.A."/>
            <person name="Mironov A.S."/>
            <person name="Debabov V.G."/>
        </authorList>
    </citation>
    <scope>X-RAY CRYSTALLOGRAPHY (2.5 ANGSTROMS)</scope>
    <scope>SUBUNIT</scope>
</reference>
<reference evidence="11" key="11">
    <citation type="journal article" date="2003" name="Acta Crystallogr. D">
        <title>Structure of Escherichia coli uridine phosphorylase at 2.0 A.</title>
        <authorList>
            <person name="Burling F.T."/>
            <person name="Kniewel R."/>
            <person name="Buglino J.A."/>
            <person name="Chadha T."/>
            <person name="Beckwith A."/>
            <person name="Lima C.D."/>
        </authorList>
    </citation>
    <scope>X-RAY CRYSTALLOGRAPHY (2.0 ANGSTROMS)</scope>
    <scope>SUBUNIT</scope>
</reference>
<proteinExistence type="evidence at protein level"/>
<comment type="function">
    <text evidence="2 9">Catalyzes the reversible phosphorylytic cleavage of uridine to uracil and ribose-1-phosphate (PubMed:16751). Shows weak activity towards deoxyuridine and thymidine (PubMed:16751). The produced molecules are then utilized as carbon and energy sources or in the rescue of pyrimidine bases for nucleotide synthesis (Probable).</text>
</comment>
<comment type="catalytic activity">
    <reaction evidence="2">
        <text>uridine + phosphate = alpha-D-ribose 1-phosphate + uracil</text>
        <dbReference type="Rhea" id="RHEA:24388"/>
        <dbReference type="ChEBI" id="CHEBI:16704"/>
        <dbReference type="ChEBI" id="CHEBI:17568"/>
        <dbReference type="ChEBI" id="CHEBI:43474"/>
        <dbReference type="ChEBI" id="CHEBI:57720"/>
        <dbReference type="EC" id="2.4.2.3"/>
    </reaction>
</comment>
<comment type="biophysicochemical properties">
    <kinetics>
        <KM evidence="2">0.15 mM for uridine</KM>
        <KM evidence="2">7.3 mM for phosphate</KM>
        <KM evidence="2">0.24 mM for uracyl</KM>
        <KM evidence="2">1.4 mM for ribose-1-phosphate</KM>
    </kinetics>
    <phDependence>
        <text evidence="2">Optimum pH is 7.3.</text>
    </phDependence>
</comment>
<comment type="pathway">
    <text>Pyrimidine metabolism; UMP biosynthesis via salvage pathway; uracil from uridine (phosphorylase route): step 1/1.</text>
</comment>
<comment type="subunit">
    <text evidence="1 3">Homohexamer.</text>
</comment>
<comment type="subcellular location">
    <subcellularLocation>
        <location evidence="9">Cytoplasm</location>
    </subcellularLocation>
</comment>
<comment type="similarity">
    <text evidence="9">Belongs to the PNP/UDP phosphorylase family.</text>
</comment>